<comment type="function">
    <text evidence="1">Catalyzes oxygen-dependent 5-hydroxyuridine (ho5U) modification at position 34 in tRNAs.</text>
</comment>
<comment type="catalytic activity">
    <reaction evidence="1">
        <text>uridine(34) in tRNA + AH2 + O2 = 5-hydroxyuridine(34) in tRNA + A + H2O</text>
        <dbReference type="Rhea" id="RHEA:64224"/>
        <dbReference type="Rhea" id="RHEA-COMP:11727"/>
        <dbReference type="Rhea" id="RHEA-COMP:13381"/>
        <dbReference type="ChEBI" id="CHEBI:13193"/>
        <dbReference type="ChEBI" id="CHEBI:15377"/>
        <dbReference type="ChEBI" id="CHEBI:15379"/>
        <dbReference type="ChEBI" id="CHEBI:17499"/>
        <dbReference type="ChEBI" id="CHEBI:65315"/>
        <dbReference type="ChEBI" id="CHEBI:136877"/>
    </reaction>
</comment>
<comment type="similarity">
    <text evidence="1">Belongs to the TrhO family.</text>
</comment>
<accession>Q81S00</accession>
<accession>Q6I080</accession>
<accession>Q6KU54</accession>
<proteinExistence type="inferred from homology"/>
<dbReference type="EC" id="1.14.-.-" evidence="1"/>
<dbReference type="EMBL" id="AE016879">
    <property type="protein sequence ID" value="AAP25782.1"/>
    <property type="molecule type" value="Genomic_DNA"/>
</dbReference>
<dbReference type="EMBL" id="AE017334">
    <property type="protein sequence ID" value="AAT30998.1"/>
    <property type="molecule type" value="Genomic_DNA"/>
</dbReference>
<dbReference type="EMBL" id="AE017225">
    <property type="protein sequence ID" value="AAT54059.1"/>
    <property type="molecule type" value="Genomic_DNA"/>
</dbReference>
<dbReference type="RefSeq" id="NP_844296.1">
    <property type="nucleotide sequence ID" value="NC_003997.3"/>
</dbReference>
<dbReference type="RefSeq" id="WP_000246229.1">
    <property type="nucleotide sequence ID" value="NZ_WXXJ01000017.1"/>
</dbReference>
<dbReference type="RefSeq" id="YP_028008.1">
    <property type="nucleotide sequence ID" value="NC_005945.1"/>
</dbReference>
<dbReference type="SMR" id="Q81S00"/>
<dbReference type="STRING" id="261594.GBAA_1881"/>
<dbReference type="DNASU" id="1086844"/>
<dbReference type="GeneID" id="45021812"/>
<dbReference type="KEGG" id="ban:BA_1881"/>
<dbReference type="KEGG" id="bar:GBAA_1881"/>
<dbReference type="KEGG" id="bat:BAS1744"/>
<dbReference type="PATRIC" id="fig|198094.11.peg.1853"/>
<dbReference type="eggNOG" id="COG1054">
    <property type="taxonomic scope" value="Bacteria"/>
</dbReference>
<dbReference type="HOGENOM" id="CLU_038878_1_0_9"/>
<dbReference type="OMA" id="CDTHTNC"/>
<dbReference type="OrthoDB" id="9778326at2"/>
<dbReference type="Proteomes" id="UP000000427">
    <property type="component" value="Chromosome"/>
</dbReference>
<dbReference type="Proteomes" id="UP000000594">
    <property type="component" value="Chromosome"/>
</dbReference>
<dbReference type="GO" id="GO:0016705">
    <property type="term" value="F:oxidoreductase activity, acting on paired donors, with incorporation or reduction of molecular oxygen"/>
    <property type="evidence" value="ECO:0007669"/>
    <property type="project" value="UniProtKB-UniRule"/>
</dbReference>
<dbReference type="GO" id="GO:0006400">
    <property type="term" value="P:tRNA modification"/>
    <property type="evidence" value="ECO:0007669"/>
    <property type="project" value="UniProtKB-UniRule"/>
</dbReference>
<dbReference type="CDD" id="cd01518">
    <property type="entry name" value="RHOD_YceA"/>
    <property type="match status" value="1"/>
</dbReference>
<dbReference type="Gene3D" id="3.30.70.100">
    <property type="match status" value="1"/>
</dbReference>
<dbReference type="Gene3D" id="3.40.250.10">
    <property type="entry name" value="Rhodanese-like domain"/>
    <property type="match status" value="1"/>
</dbReference>
<dbReference type="HAMAP" id="MF_00469">
    <property type="entry name" value="TrhO"/>
    <property type="match status" value="1"/>
</dbReference>
<dbReference type="InterPro" id="IPR001763">
    <property type="entry name" value="Rhodanese-like_dom"/>
</dbReference>
<dbReference type="InterPro" id="IPR036873">
    <property type="entry name" value="Rhodanese-like_dom_sf"/>
</dbReference>
<dbReference type="InterPro" id="IPR022111">
    <property type="entry name" value="Rhodanese_C"/>
</dbReference>
<dbReference type="InterPro" id="IPR020936">
    <property type="entry name" value="TrhO"/>
</dbReference>
<dbReference type="InterPro" id="IPR040503">
    <property type="entry name" value="TRHO_N"/>
</dbReference>
<dbReference type="NCBIfam" id="NF001135">
    <property type="entry name" value="PRK00142.1-3"/>
    <property type="match status" value="1"/>
</dbReference>
<dbReference type="PANTHER" id="PTHR43268:SF3">
    <property type="entry name" value="RHODANESE-LIKE DOMAIN-CONTAINING PROTEIN 7-RELATED"/>
    <property type="match status" value="1"/>
</dbReference>
<dbReference type="PANTHER" id="PTHR43268">
    <property type="entry name" value="THIOSULFATE SULFURTRANSFERASE/RHODANESE-LIKE DOMAIN-CONTAINING PROTEIN 2"/>
    <property type="match status" value="1"/>
</dbReference>
<dbReference type="Pfam" id="PF00581">
    <property type="entry name" value="Rhodanese"/>
    <property type="match status" value="1"/>
</dbReference>
<dbReference type="Pfam" id="PF12368">
    <property type="entry name" value="Rhodanese_C"/>
    <property type="match status" value="1"/>
</dbReference>
<dbReference type="Pfam" id="PF17773">
    <property type="entry name" value="UPF0176_N"/>
    <property type="match status" value="1"/>
</dbReference>
<dbReference type="SMART" id="SM00450">
    <property type="entry name" value="RHOD"/>
    <property type="match status" value="1"/>
</dbReference>
<dbReference type="SUPFAM" id="SSF52821">
    <property type="entry name" value="Rhodanese/Cell cycle control phosphatase"/>
    <property type="match status" value="1"/>
</dbReference>
<dbReference type="PROSITE" id="PS50206">
    <property type="entry name" value="RHODANESE_3"/>
    <property type="match status" value="1"/>
</dbReference>
<organism>
    <name type="scientific">Bacillus anthracis</name>
    <dbReference type="NCBI Taxonomy" id="1392"/>
    <lineage>
        <taxon>Bacteria</taxon>
        <taxon>Bacillati</taxon>
        <taxon>Bacillota</taxon>
        <taxon>Bacilli</taxon>
        <taxon>Bacillales</taxon>
        <taxon>Bacillaceae</taxon>
        <taxon>Bacillus</taxon>
        <taxon>Bacillus cereus group</taxon>
    </lineage>
</organism>
<protein>
    <recommendedName>
        <fullName evidence="1">tRNA uridine(34) hydroxylase</fullName>
        <ecNumber evidence="1">1.14.-.-</ecNumber>
    </recommendedName>
    <alternativeName>
        <fullName evidence="1">tRNA hydroxylation protein O</fullName>
    </alternativeName>
</protein>
<feature type="chain" id="PRO_0000161437" description="tRNA uridine(34) hydroxylase">
    <location>
        <begin position="1"/>
        <end position="319"/>
    </location>
</feature>
<feature type="domain" description="Rhodanese" evidence="1">
    <location>
        <begin position="127"/>
        <end position="221"/>
    </location>
</feature>
<feature type="active site" description="Cysteine persulfide intermediate" evidence="1">
    <location>
        <position position="181"/>
    </location>
</feature>
<keyword id="KW-0560">Oxidoreductase</keyword>
<keyword id="KW-1185">Reference proteome</keyword>
<keyword id="KW-0819">tRNA processing</keyword>
<reference key="1">
    <citation type="journal article" date="2003" name="Nature">
        <title>The genome sequence of Bacillus anthracis Ames and comparison to closely related bacteria.</title>
        <authorList>
            <person name="Read T.D."/>
            <person name="Peterson S.N."/>
            <person name="Tourasse N.J."/>
            <person name="Baillie L.W."/>
            <person name="Paulsen I.T."/>
            <person name="Nelson K.E."/>
            <person name="Tettelin H."/>
            <person name="Fouts D.E."/>
            <person name="Eisen J.A."/>
            <person name="Gill S.R."/>
            <person name="Holtzapple E.K."/>
            <person name="Okstad O.A."/>
            <person name="Helgason E."/>
            <person name="Rilstone J."/>
            <person name="Wu M."/>
            <person name="Kolonay J.F."/>
            <person name="Beanan M.J."/>
            <person name="Dodson R.J."/>
            <person name="Brinkac L.M."/>
            <person name="Gwinn M.L."/>
            <person name="DeBoy R.T."/>
            <person name="Madpu R."/>
            <person name="Daugherty S.C."/>
            <person name="Durkin A.S."/>
            <person name="Haft D.H."/>
            <person name="Nelson W.C."/>
            <person name="Peterson J.D."/>
            <person name="Pop M."/>
            <person name="Khouri H.M."/>
            <person name="Radune D."/>
            <person name="Benton J.L."/>
            <person name="Mahamoud Y."/>
            <person name="Jiang L."/>
            <person name="Hance I.R."/>
            <person name="Weidman J.F."/>
            <person name="Berry K.J."/>
            <person name="Plaut R.D."/>
            <person name="Wolf A.M."/>
            <person name="Watkins K.L."/>
            <person name="Nierman W.C."/>
            <person name="Hazen A."/>
            <person name="Cline R.T."/>
            <person name="Redmond C."/>
            <person name="Thwaite J.E."/>
            <person name="White O."/>
            <person name="Salzberg S.L."/>
            <person name="Thomason B."/>
            <person name="Friedlander A.M."/>
            <person name="Koehler T.M."/>
            <person name="Hanna P.C."/>
            <person name="Kolstoe A.-B."/>
            <person name="Fraser C.M."/>
        </authorList>
    </citation>
    <scope>NUCLEOTIDE SEQUENCE [LARGE SCALE GENOMIC DNA]</scope>
    <source>
        <strain>Ames / isolate Porton</strain>
    </source>
</reference>
<reference key="2">
    <citation type="journal article" date="2009" name="J. Bacteriol.">
        <title>The complete genome sequence of Bacillus anthracis Ames 'Ancestor'.</title>
        <authorList>
            <person name="Ravel J."/>
            <person name="Jiang L."/>
            <person name="Stanley S.T."/>
            <person name="Wilson M.R."/>
            <person name="Decker R.S."/>
            <person name="Read T.D."/>
            <person name="Worsham P."/>
            <person name="Keim P.S."/>
            <person name="Salzberg S.L."/>
            <person name="Fraser-Liggett C.M."/>
            <person name="Rasko D.A."/>
        </authorList>
    </citation>
    <scope>NUCLEOTIDE SEQUENCE [LARGE SCALE GENOMIC DNA]</scope>
    <source>
        <strain>Ames ancestor</strain>
    </source>
</reference>
<reference key="3">
    <citation type="submission" date="2004-01" db="EMBL/GenBank/DDBJ databases">
        <title>Complete genome sequence of Bacillus anthracis Sterne.</title>
        <authorList>
            <person name="Brettin T.S."/>
            <person name="Bruce D."/>
            <person name="Challacombe J.F."/>
            <person name="Gilna P."/>
            <person name="Han C."/>
            <person name="Hill K."/>
            <person name="Hitchcock P."/>
            <person name="Jackson P."/>
            <person name="Keim P."/>
            <person name="Longmire J."/>
            <person name="Lucas S."/>
            <person name="Okinaka R."/>
            <person name="Richardson P."/>
            <person name="Rubin E."/>
            <person name="Tice H."/>
        </authorList>
    </citation>
    <scope>NUCLEOTIDE SEQUENCE [LARGE SCALE GENOMIC DNA]</scope>
    <source>
        <strain>Sterne</strain>
    </source>
</reference>
<sequence>MATTKPYRVLLYYMYTTIENPEEFAAEHLEFCNSLELKGRILVAKEGINGTCSGTVEQTEKYMEAMNNDPRFDGIVFKIDEADGHAFKKMHVRPRPELVTLRLEDDINPHEITGKYLEPKDFYEAMKQEDTVIIDARNDYEFDLGHFKGAIKPDIESFRELPDWIRENKEVLEGKKILTYCTGGIRCEKFSGWLVREGYEDVSQLHGGIVTYGKDPEVQGELWDGQCYVFDERIAVPVNQKEHVIVGKDHFTGEPCERYVNCANPECNKKILCSEENEAKYLRACSHECRVSPRNRYVIQHELTEEQVAAALEKIEAGK</sequence>
<name>TRHO_BACAN</name>
<gene>
    <name evidence="1" type="primary">trhO</name>
    <name type="ordered locus">BA_1881</name>
    <name type="ordered locus">GBAA_1881</name>
    <name type="ordered locus">BAS1744</name>
</gene>
<evidence type="ECO:0000255" key="1">
    <source>
        <dbReference type="HAMAP-Rule" id="MF_00469"/>
    </source>
</evidence>